<keyword id="KW-0002">3D-structure</keyword>
<keyword id="KW-0007">Acetylation</keyword>
<keyword id="KW-0010">Activator</keyword>
<keyword id="KW-0877">Alternative promoter usage</keyword>
<keyword id="KW-0025">Alternative splicing</keyword>
<keyword id="KW-0090">Biological rhythms</keyword>
<keyword id="KW-0539">Nucleus</keyword>
<keyword id="KW-0597">Phosphoprotein</keyword>
<keyword id="KW-1185">Reference proteome</keyword>
<keyword id="KW-0694">RNA-binding</keyword>
<keyword id="KW-0804">Transcription</keyword>
<keyword id="KW-0805">Transcription regulation</keyword>
<keyword id="KW-0832">Ubl conjugation</keyword>
<name>PRGC1_MOUSE</name>
<feature type="chain" id="PRO_0000081733" description="Peroxisome proliferator-activated receptor gamma coactivator 1-alpha">
    <location>
        <begin position="1"/>
        <end position="797"/>
    </location>
</feature>
<feature type="domain" description="RRM" evidence="2">
    <location>
        <begin position="676"/>
        <end position="752"/>
    </location>
</feature>
<feature type="region of interest" description="Disordered" evidence="3">
    <location>
        <begin position="101"/>
        <end position="138"/>
    </location>
</feature>
<feature type="region of interest" description="Disordered" evidence="3">
    <location>
        <begin position="212"/>
        <end position="276"/>
    </location>
</feature>
<feature type="region of interest" description="Disordered" evidence="3">
    <location>
        <begin position="289"/>
        <end position="376"/>
    </location>
</feature>
<feature type="region of interest" description="Interaction with PPARG" evidence="1">
    <location>
        <begin position="292"/>
        <end position="338"/>
    </location>
</feature>
<feature type="region of interest" description="Mediates interaction with RNF34" evidence="1">
    <location>
        <begin position="349"/>
        <end position="797"/>
    </location>
</feature>
<feature type="region of interest" description="Disordered" evidence="3">
    <location>
        <begin position="543"/>
        <end position="598"/>
    </location>
</feature>
<feature type="region of interest" description="Disordered" evidence="3">
    <location>
        <begin position="612"/>
        <end position="634"/>
    </location>
</feature>
<feature type="region of interest" description="Disordered" evidence="3">
    <location>
        <begin position="648"/>
        <end position="668"/>
    </location>
</feature>
<feature type="short sequence motif" description="LXXLL motif" evidence="10">
    <location>
        <begin position="142"/>
        <end position="146"/>
    </location>
</feature>
<feature type="compositionally biased region" description="Polar residues" evidence="3">
    <location>
        <begin position="114"/>
        <end position="127"/>
    </location>
</feature>
<feature type="compositionally biased region" description="Basic and acidic residues" evidence="3">
    <location>
        <begin position="218"/>
        <end position="236"/>
    </location>
</feature>
<feature type="compositionally biased region" description="Polar residues" evidence="3">
    <location>
        <begin position="243"/>
        <end position="259"/>
    </location>
</feature>
<feature type="compositionally biased region" description="Basic residues" evidence="3">
    <location>
        <begin position="562"/>
        <end position="577"/>
    </location>
</feature>
<feature type="compositionally biased region" description="Low complexity" evidence="3">
    <location>
        <begin position="578"/>
        <end position="598"/>
    </location>
</feature>
<feature type="compositionally biased region" description="Basic residues" evidence="3">
    <location>
        <begin position="621"/>
        <end position="630"/>
    </location>
</feature>
<feature type="modified residue" description="N6-acetyllysine" evidence="8">
    <location>
        <position position="77"/>
    </location>
</feature>
<feature type="modified residue" description="N6-acetyllysine" evidence="8">
    <location>
        <position position="144"/>
    </location>
</feature>
<feature type="modified residue" description="Phosphothreonine; by AMPK" evidence="11">
    <location>
        <position position="177"/>
    </location>
</feature>
<feature type="modified residue" description="N6-acetyllysine" evidence="8">
    <location>
        <position position="183"/>
    </location>
</feature>
<feature type="modified residue" description="N6-acetyllysine" evidence="8">
    <location>
        <position position="253"/>
    </location>
</feature>
<feature type="modified residue" description="N6-acetyllysine" evidence="8">
    <location>
        <position position="270"/>
    </location>
</feature>
<feature type="modified residue" description="N6-acetyllysine" evidence="8">
    <location>
        <position position="277"/>
    </location>
</feature>
<feature type="modified residue" description="N6-acetyllysine" evidence="8">
    <location>
        <position position="320"/>
    </location>
</feature>
<feature type="modified residue" description="N6-acetyllysine" evidence="8">
    <location>
        <position position="346"/>
    </location>
</feature>
<feature type="modified residue" description="N6-acetyllysine" evidence="8">
    <location>
        <position position="412"/>
    </location>
</feature>
<feature type="modified residue" description="N6-acetyllysine" evidence="8">
    <location>
        <position position="441"/>
    </location>
</feature>
<feature type="modified residue" description="N6-acetyllysine" evidence="8">
    <location>
        <position position="450"/>
    </location>
</feature>
<feature type="modified residue" description="Phosphoserine; by AMPK" evidence="11">
    <location>
        <position position="538"/>
    </location>
</feature>
<feature type="modified residue" description="N6-acetyllysine" evidence="8">
    <location>
        <position position="757"/>
    </location>
</feature>
<feature type="modified residue" description="N6-acetyllysine" evidence="8">
    <location>
        <position position="778"/>
    </location>
</feature>
<feature type="splice variant" id="VSP_053275" description="In isoform 2 and isoform 4." evidence="19">
    <original>AWDMCSQDSVWSDIE</original>
    <variation>LGLSSMDSILK</variation>
    <location>
        <begin position="2"/>
        <end position="16"/>
    </location>
</feature>
<feature type="splice variant" id="VSP_053276" description="In isoform 3." evidence="19">
    <original>AWDMCSQDSVWSDIE</original>
    <variation>LL</variation>
    <location>
        <begin position="2"/>
        <end position="16"/>
    </location>
</feature>
<feature type="splice variant" id="VSP_053277" description="In isoform 2 and isoform 3." evidence="19">
    <location>
        <begin position="108"/>
        <end position="274"/>
    </location>
</feature>
<feature type="splice variant" id="VSP_053279" description="In isoform 4." evidence="19">
    <original>DPKGSPFENKTIERTLSVELSGTAGLTPPTTPPHKANQDNPFKASPKLKPSCKTVVPPPTKRARYSECSGTQGSHSTKKGPEQSELYAQLSKSSGLSRGHEERKTKRPSLRLFGDHDYCQSLNSKTDILINISQELQDSRQLDFKDASCDWQGHICSSTDSGQCYLRETLEASKQVSPCSTRKQLQDQEIRAELNKHFGHPCQAVFDDKSDKTSELRDGDFSNEQFSKLPVFI</original>
    <variation>LFL</variation>
    <location>
        <begin position="268"/>
        <end position="500"/>
    </location>
</feature>
<feature type="splice variant" id="VSP_053281" description="In isoform 4." evidence="19">
    <location>
        <begin position="501"/>
        <end position="797"/>
    </location>
</feature>
<feature type="splice variant" id="VSP_053278" description="In isoform 2 and isoform 3." evidence="19">
    <original>PCRDSVSPPKSLFSQRPQRMRSRSRSFSRHRSCSRSPYSRSRSRSPGSRSSSRSCYYYESSHYRHRTHRNSPLYVRSRSRSPYSRRPRYDSYEAYEHERLKRDEYRKEHEKRESERAKQRERQKQKAIEERRVIYV</original>
    <variation>LNVIIT</variation>
    <location>
        <begin position="545"/>
        <end position="680"/>
    </location>
</feature>
<feature type="splice variant" id="VSP_053280" description="In isoform 2 and isoform 3." evidence="19">
    <location>
        <begin position="681"/>
        <end position="797"/>
    </location>
</feature>
<feature type="mutagenesis site" description="Strongly reduces coactivation of RORA activity." evidence="10">
    <original>LKKLL</original>
    <variation>AKKAA</variation>
    <location>
        <begin position="142"/>
        <end position="146"/>
    </location>
</feature>
<feature type="mutagenesis site" description="Abolishes AMPK-mediated phosphorylation; when associated with A-538." evidence="11">
    <original>T</original>
    <variation>A</variation>
    <location>
        <position position="177"/>
    </location>
</feature>
<feature type="mutagenesis site" description="Abolishes AMPK-mediated phosphorylation; when associated with A-177." evidence="11">
    <original>S</original>
    <variation>A</variation>
    <location>
        <position position="538"/>
    </location>
</feature>
<feature type="sequence conflict" description="In Ref. 5; AAH66868." evidence="20" ref="5">
    <original>S</original>
    <variation>L</variation>
    <location>
        <position position="587"/>
    </location>
</feature>
<feature type="sequence conflict" description="In Ref. 5; AAH66868." evidence="20" ref="5">
    <original>R</original>
    <variation>C</variation>
    <location>
        <position position="629"/>
    </location>
</feature>
<feature type="helix" evidence="21">
    <location>
        <begin position="141"/>
        <end position="147"/>
    </location>
</feature>
<accession>O70343</accession>
<accession>L0AM20</accession>
<accession>L0AN96</accession>
<accession>L0APB0</accession>
<accession>Q3UP72</accession>
<evidence type="ECO:0000250" key="1">
    <source>
        <dbReference type="UniProtKB" id="Q9UBK2"/>
    </source>
</evidence>
<evidence type="ECO:0000255" key="2">
    <source>
        <dbReference type="PROSITE-ProRule" id="PRU00176"/>
    </source>
</evidence>
<evidence type="ECO:0000256" key="3">
    <source>
        <dbReference type="SAM" id="MobiDB-lite"/>
    </source>
</evidence>
<evidence type="ECO:0000269" key="4">
    <source>
    </source>
</evidence>
<evidence type="ECO:0000269" key="5">
    <source>
    </source>
</evidence>
<evidence type="ECO:0000269" key="6">
    <source>
    </source>
</evidence>
<evidence type="ECO:0000269" key="7">
    <source>
    </source>
</evidence>
<evidence type="ECO:0000269" key="8">
    <source>
    </source>
</evidence>
<evidence type="ECO:0000269" key="9">
    <source>
    </source>
</evidence>
<evidence type="ECO:0000269" key="10">
    <source>
    </source>
</evidence>
<evidence type="ECO:0000269" key="11">
    <source>
    </source>
</evidence>
<evidence type="ECO:0000269" key="12">
    <source>
    </source>
</evidence>
<evidence type="ECO:0000269" key="13">
    <source>
    </source>
</evidence>
<evidence type="ECO:0000269" key="14">
    <source>
    </source>
</evidence>
<evidence type="ECO:0000269" key="15">
    <source>
    </source>
</evidence>
<evidence type="ECO:0000269" key="16">
    <source>
    </source>
</evidence>
<evidence type="ECO:0000269" key="17">
    <source>
    </source>
</evidence>
<evidence type="ECO:0000269" key="18">
    <source>
    </source>
</evidence>
<evidence type="ECO:0000303" key="19">
    <source>
    </source>
</evidence>
<evidence type="ECO:0000305" key="20"/>
<evidence type="ECO:0007829" key="21">
    <source>
        <dbReference type="PDB" id="3F7D"/>
    </source>
</evidence>
<organism>
    <name type="scientific">Mus musculus</name>
    <name type="common">Mouse</name>
    <dbReference type="NCBI Taxonomy" id="10090"/>
    <lineage>
        <taxon>Eukaryota</taxon>
        <taxon>Metazoa</taxon>
        <taxon>Chordata</taxon>
        <taxon>Craniata</taxon>
        <taxon>Vertebrata</taxon>
        <taxon>Euteleostomi</taxon>
        <taxon>Mammalia</taxon>
        <taxon>Eutheria</taxon>
        <taxon>Euarchontoglires</taxon>
        <taxon>Glires</taxon>
        <taxon>Rodentia</taxon>
        <taxon>Myomorpha</taxon>
        <taxon>Muroidea</taxon>
        <taxon>Muridae</taxon>
        <taxon>Murinae</taxon>
        <taxon>Mus</taxon>
        <taxon>Mus</taxon>
    </lineage>
</organism>
<proteinExistence type="evidence at protein level"/>
<comment type="function">
    <text evidence="1 5 8 10 17 18">Transcriptional coactivator for steroid receptors and nuclear receptors (PubMed:12754525, PubMed:15744310, PubMed:23217713, PubMed:9529258). Greatly increases the transcriptional activity of PPARG and thyroid hormone receptor on the uncoupling protein promoter (PubMed:12754525, PubMed:15744310, PubMed:23217713, PubMed:9529258). Can regulate key mitochondrial genes that contribute to the program of adaptive thermogenesis (PubMed:12754525, PubMed:15744310, PubMed:23217713, PubMed:9529258). Plays an essential role in metabolic reprogramming in response to dietary availability through coordination of the expression of a wide array of genes involved in glucose and fatty acid metabolism (PubMed:12754525, PubMed:15744310, PubMed:23217713, PubMed:9529258). Acts as a key regulator of gluconeogenesis: stimulates hepatic gluconeogenesis by increasing the expression of gluconeogenic enzymes, and acting together with FOXO1 to promote the fasting gluconeogenic program (PubMed:12754525). Induces the expression of PERM1 in the skeletal muscle in an ESRRA-dependent manner (By similarity). Also involved in the integration of the circadian rhythms and energy metabolism (PubMed:17476214). Required for oscillatory expression of clock genes, such as BMAL1 and NR1D1, through the coactivation of RORA and RORC, and metabolic genes, such as PDK4 and PEPCK (PubMed:17476214).</text>
</comment>
<comment type="subunit">
    <text evidence="1 5 6 9 10 12 13 16">Homooligomer (By similarity). Interacts with MYBBP1A; inhibits MYBBP1A transcriptional activation (PubMed:14744933). Interacts with PRDM16, LPIN1 and PML (PubMed:16950137, PubMed:17618855, PubMed:18483224, PubMed:22886304). Interacts (via LXXLL motif) with RORA and RORC (via AF-2 motif); activates RORA and RORC transcriptional activation (PubMed:17476214). Interacts with LRPPRC (By similarity). Interacts with FOXO1 (PubMed:12754525). Interacts with NR5A2 (By similarity).</text>
</comment>
<comment type="interaction">
    <interactant intactId="EBI-1371053">
        <id>O70343</id>
    </interactant>
    <interactant intactId="EBI-6398485">
        <id>Q64287</id>
        <label>Irf4</label>
    </interactant>
    <organismsDiffer>false</organismsDiffer>
    <experiments>6</experiments>
</comment>
<comment type="interaction">
    <interactant intactId="EBI-1371053">
        <id>O70343</id>
    </interactant>
    <interactant intactId="EBI-1371262">
        <id>Q6PB66</id>
        <label>Lrpprc</label>
    </interactant>
    <organismsDiffer>false</organismsDiffer>
    <experiments>2</experiments>
</comment>
<comment type="interaction">
    <interactant intactId="EBI-1371053">
        <id>O70343</id>
    </interactant>
    <interactant intactId="EBI-1802585">
        <id>Q923E4</id>
        <label>Sirt1</label>
    </interactant>
    <organismsDiffer>false</organismsDiffer>
    <experiments>6</experiments>
</comment>
<comment type="interaction">
    <interactant intactId="EBI-1371053">
        <id>O70343</id>
    </interactant>
    <interactant intactId="EBI-6921536">
        <id>Q00899</id>
        <label>Yy1</label>
    </interactant>
    <organismsDiffer>false</organismsDiffer>
    <experiments>5</experiments>
</comment>
<comment type="interaction">
    <interactant intactId="EBI-1371053">
        <id>O70343</id>
    </interactant>
    <interactant intactId="EBI-11057552">
        <id>Q6GMV2</id>
        <label>SMYD5</label>
    </interactant>
    <organismsDiffer>true</organismsDiffer>
    <experiments>4</experiments>
</comment>
<comment type="interaction">
    <interactant intactId="EBI-11359934">
        <id>O70343-1</id>
    </interactant>
    <interactant intactId="EBI-11659377">
        <id>Q60641-1</id>
        <label>Nr1h4</label>
    </interactant>
    <organismsDiffer>false</organismsDiffer>
    <experiments>3</experiments>
</comment>
<comment type="interaction">
    <interactant intactId="EBI-11359934">
        <id>O70343-1</id>
    </interactant>
    <interactant intactId="EBI-11659386">
        <id>Q60641-2</id>
        <label>Nr1h4</label>
    </interactant>
    <organismsDiffer>false</organismsDiffer>
    <experiments>2</experiments>
</comment>
<comment type="subcellular location">
    <subcellularLocation>
        <location evidence="16 17">Nucleus</location>
    </subcellularLocation>
    <subcellularLocation>
        <location evidence="16">Nucleus</location>
        <location evidence="16">PML body</location>
    </subcellularLocation>
</comment>
<comment type="alternative products">
    <event type="alternative promoter"/>
    <event type="alternative splicing"/>
    <isoform>
        <id>O70343-1</id>
        <name>1</name>
        <name>PGC-1a1</name>
        <sequence type="displayed"/>
    </isoform>
    <isoform>
        <id>O70343-2</id>
        <name>2</name>
        <name>PGC-1a2</name>
        <sequence type="described" ref="VSP_053275 VSP_053277 VSP_053278 VSP_053280"/>
    </isoform>
    <isoform>
        <id>O70343-3</id>
        <name>3</name>
        <name>PGC-1a3</name>
        <sequence type="described" ref="VSP_053276 VSP_053277 VSP_053278 VSP_053280"/>
    </isoform>
    <isoform>
        <id>O70343-4</id>
        <name>4</name>
        <name>PGC-1a4</name>
        <sequence type="described" ref="VSP_053275 VSP_053279 VSP_053281"/>
    </isoform>
</comment>
<comment type="tissue specificity">
    <text evidence="10 17 18">White quadriceps and red tibialis anterior (TA) muscles, liver, kidney and brown adipose tissue (at protein level). Skeletal muscle, brown adipose tissue, heart, kidney and brain.</text>
</comment>
<comment type="induction">
    <text evidence="4 10 15 17 18">Dramatically induced in brown adipose tissue and skeletal muscle by exposure of animals to cold. Up-regulated in brown adipose tissue of obese leptin-deficient (ob/ob) and leptin-unresponsive (db/db) mice. Leptin is required for normal basal and cold-stimulated expression in brown adipose tissue and hyperleptinemia rapidly up-regulates its expression. Induced in muscle by exercise. Oscillates diurnally in liver and skeletal muscle.</text>
</comment>
<comment type="PTM">
    <text evidence="11 14">Phosphorylation by AMPK in skeletal muscle increases activation of its own promoter (PubMed:17609368). Phosphorylated by CLK2 (PubMed:20074525).</text>
</comment>
<comment type="PTM">
    <text evidence="7 8">Heavily acetylated by KAT2A/GCN5 under conditions of high nutrients, leading to inactivation of PPARGC1A (PubMed:15744310). Deacetylated by SIRT1 in low nutrients/high NAD conditions, leading to its activation (PubMed:15716268, PubMed:15744310).</text>
</comment>
<comment type="PTM">
    <text evidence="1">Ubiquitinated. Ubiquitination by RNF34 induces proteasomal degradation.</text>
</comment>
<comment type="disruption phenotype">
    <text evidence="10">Mice show abnormal diurnal rhythms of activity, body temperature and metabolic rate.</text>
</comment>
<comment type="miscellaneous">
    <molecule>Isoform 2</molecule>
    <text evidence="20">Produced by alternative promoter usage and alternative splicing.</text>
</comment>
<comment type="miscellaneous">
    <molecule>Isoform 3</molecule>
    <text evidence="20">Produced by alternative promoter usage and alternative splicing.</text>
</comment>
<comment type="miscellaneous">
    <molecule>Isoform 4</molecule>
    <text evidence="20">Produced by alternative promoter usage and alternative splicing.</text>
</comment>
<sequence>MAWDMCSQDSVWSDIECAALVGEDQPLCPDLPELDLSELDVNDLDTDSFLGGLKWCSDQSEIISNQYNNEPANIFEKIDEENEANLLAVLTETLDSLPVDEDGLPSFDALTDGAVTTDNEASPSSMPDGTPPPQEAEEPSLLKKLLLAPANTQLSYNECSGLSTQNHAANHTHRIRTNPAIVKTENSWSNKAKSICQQQKPQRRPCSELLKYLTTNDDPPHTKPTENRNSSRDKCASKKKSHTQPQSQHAQAKPTTLSLPLTPESPNDPKGSPFENKTIERTLSVELSGTAGLTPPTTPPHKANQDNPFKASPKLKPSCKTVVPPPTKRARYSECSGTQGSHSTKKGPEQSELYAQLSKSSGLSRGHEERKTKRPSLRLFGDHDYCQSLNSKTDILINISQELQDSRQLDFKDASCDWQGHICSSTDSGQCYLRETLEASKQVSPCSTRKQLQDQEIRAELNKHFGHPCQAVFDDKSDKTSELRDGDFSNEQFSKLPVFINSGLAMDGLFDDSEDESDKLSYPWDGTQPYSLFDVSPSCSSFNSPCRDSVSPPKSLFSQRPQRMRSRSRSFSRHRSCSRSPYSRSRSRSPGSRSSSRSCYYYESSHYRHRTHRNSPLYVRSRSRSPYSRRPRYDSYEAYEHERLKRDEYRKEHEKRESERAKQRERQKQKAIEERRVIYVGKIRPDTTRTELRDRFEVFGEIEECTVNLRDDGDSYGFITYRYTCDAFAALENGYTLRRSNETDFELYFCGRKQFFKSNYADLDTNSDDFDPASTKSKYDSLDFDSLLKEAQRSLRR</sequence>
<gene>
    <name type="primary">Ppargc1a</name>
    <name type="synonym">Pgc1</name>
    <name type="synonym">Pgc1a</name>
    <name type="synonym">Ppargc1</name>
</gene>
<reference key="1">
    <citation type="journal article" date="1998" name="Cell">
        <title>A cold-inducible coactivator of nuclear receptors linked to adaptive thermogenesis.</title>
        <authorList>
            <person name="Puigserver P."/>
            <person name="Wu Z."/>
            <person name="Park C.W."/>
            <person name="Graves R."/>
            <person name="Wright M."/>
            <person name="Spiegelman B.M."/>
        </authorList>
    </citation>
    <scope>NUCLEOTIDE SEQUENCE [MRNA] (ISOFORM 1)</scope>
    <scope>FUNCTION</scope>
    <scope>INDUCTION</scope>
    <scope>TISSUE SPECIFICITY</scope>
    <source>
        <strain>C57BL/6J</strain>
        <tissue>Brown adipose tissue</tissue>
    </source>
</reference>
<reference key="2">
    <citation type="journal article" date="2012" name="Cell">
        <title>A PGC-1alpha isoform induced by resistance training regulates skeletal muscle hypertrophy.</title>
        <authorList>
            <person name="Ruas J.L."/>
            <person name="White J.P."/>
            <person name="Rao R.R."/>
            <person name="Kleiner S."/>
            <person name="Brannan K.T."/>
            <person name="Harrison B.C."/>
            <person name="Greene N.P."/>
            <person name="Wu J."/>
            <person name="Estall J.L."/>
            <person name="Irving B.A."/>
            <person name="Lanza I.R."/>
            <person name="Rasbach K.A."/>
            <person name="Okutsu M."/>
            <person name="Nair K.S."/>
            <person name="Yan Z."/>
            <person name="Leinwand L.A."/>
            <person name="Spiegelman B.M."/>
        </authorList>
    </citation>
    <scope>NUCLEOTIDE SEQUENCE [MRNA] (ISOFORMS 1; 2; 3 AND 4)</scope>
    <scope>FUNCTION</scope>
    <scope>SUBCELLULAR LOCATION</scope>
    <scope>ALTERNATIVE PROMOTER USAGE</scope>
    <scope>TISSUE SPECIFICITY</scope>
    <scope>INDUCTION</scope>
    <source>
        <strain>C57BL/6J</strain>
        <tissue>Skeletal muscle</tissue>
    </source>
</reference>
<reference key="3">
    <citation type="journal article" date="2005" name="Science">
        <title>The transcriptional landscape of the mammalian genome.</title>
        <authorList>
            <person name="Carninci P."/>
            <person name="Kasukawa T."/>
            <person name="Katayama S."/>
            <person name="Gough J."/>
            <person name="Frith M.C."/>
            <person name="Maeda N."/>
            <person name="Oyama R."/>
            <person name="Ravasi T."/>
            <person name="Lenhard B."/>
            <person name="Wells C."/>
            <person name="Kodzius R."/>
            <person name="Shimokawa K."/>
            <person name="Bajic V.B."/>
            <person name="Brenner S.E."/>
            <person name="Batalov S."/>
            <person name="Forrest A.R."/>
            <person name="Zavolan M."/>
            <person name="Davis M.J."/>
            <person name="Wilming L.G."/>
            <person name="Aidinis V."/>
            <person name="Allen J.E."/>
            <person name="Ambesi-Impiombato A."/>
            <person name="Apweiler R."/>
            <person name="Aturaliya R.N."/>
            <person name="Bailey T.L."/>
            <person name="Bansal M."/>
            <person name="Baxter L."/>
            <person name="Beisel K.W."/>
            <person name="Bersano T."/>
            <person name="Bono H."/>
            <person name="Chalk A.M."/>
            <person name="Chiu K.P."/>
            <person name="Choudhary V."/>
            <person name="Christoffels A."/>
            <person name="Clutterbuck D.R."/>
            <person name="Crowe M.L."/>
            <person name="Dalla E."/>
            <person name="Dalrymple B.P."/>
            <person name="de Bono B."/>
            <person name="Della Gatta G."/>
            <person name="di Bernardo D."/>
            <person name="Down T."/>
            <person name="Engstrom P."/>
            <person name="Fagiolini M."/>
            <person name="Faulkner G."/>
            <person name="Fletcher C.F."/>
            <person name="Fukushima T."/>
            <person name="Furuno M."/>
            <person name="Futaki S."/>
            <person name="Gariboldi M."/>
            <person name="Georgii-Hemming P."/>
            <person name="Gingeras T.R."/>
            <person name="Gojobori T."/>
            <person name="Green R.E."/>
            <person name="Gustincich S."/>
            <person name="Harbers M."/>
            <person name="Hayashi Y."/>
            <person name="Hensch T.K."/>
            <person name="Hirokawa N."/>
            <person name="Hill D."/>
            <person name="Huminiecki L."/>
            <person name="Iacono M."/>
            <person name="Ikeo K."/>
            <person name="Iwama A."/>
            <person name="Ishikawa T."/>
            <person name="Jakt M."/>
            <person name="Kanapin A."/>
            <person name="Katoh M."/>
            <person name="Kawasawa Y."/>
            <person name="Kelso J."/>
            <person name="Kitamura H."/>
            <person name="Kitano H."/>
            <person name="Kollias G."/>
            <person name="Krishnan S.P."/>
            <person name="Kruger A."/>
            <person name="Kummerfeld S.K."/>
            <person name="Kurochkin I.V."/>
            <person name="Lareau L.F."/>
            <person name="Lazarevic D."/>
            <person name="Lipovich L."/>
            <person name="Liu J."/>
            <person name="Liuni S."/>
            <person name="McWilliam S."/>
            <person name="Madan Babu M."/>
            <person name="Madera M."/>
            <person name="Marchionni L."/>
            <person name="Matsuda H."/>
            <person name="Matsuzawa S."/>
            <person name="Miki H."/>
            <person name="Mignone F."/>
            <person name="Miyake S."/>
            <person name="Morris K."/>
            <person name="Mottagui-Tabar S."/>
            <person name="Mulder N."/>
            <person name="Nakano N."/>
            <person name="Nakauchi H."/>
            <person name="Ng P."/>
            <person name="Nilsson R."/>
            <person name="Nishiguchi S."/>
            <person name="Nishikawa S."/>
            <person name="Nori F."/>
            <person name="Ohara O."/>
            <person name="Okazaki Y."/>
            <person name="Orlando V."/>
            <person name="Pang K.C."/>
            <person name="Pavan W.J."/>
            <person name="Pavesi G."/>
            <person name="Pesole G."/>
            <person name="Petrovsky N."/>
            <person name="Piazza S."/>
            <person name="Reed J."/>
            <person name="Reid J.F."/>
            <person name="Ring B.Z."/>
            <person name="Ringwald M."/>
            <person name="Rost B."/>
            <person name="Ruan Y."/>
            <person name="Salzberg S.L."/>
            <person name="Sandelin A."/>
            <person name="Schneider C."/>
            <person name="Schoenbach C."/>
            <person name="Sekiguchi K."/>
            <person name="Semple C.A."/>
            <person name="Seno S."/>
            <person name="Sessa L."/>
            <person name="Sheng Y."/>
            <person name="Shibata Y."/>
            <person name="Shimada H."/>
            <person name="Shimada K."/>
            <person name="Silva D."/>
            <person name="Sinclair B."/>
            <person name="Sperling S."/>
            <person name="Stupka E."/>
            <person name="Sugiura K."/>
            <person name="Sultana R."/>
            <person name="Takenaka Y."/>
            <person name="Taki K."/>
            <person name="Tammoja K."/>
            <person name="Tan S.L."/>
            <person name="Tang S."/>
            <person name="Taylor M.S."/>
            <person name="Tegner J."/>
            <person name="Teichmann S.A."/>
            <person name="Ueda H.R."/>
            <person name="van Nimwegen E."/>
            <person name="Verardo R."/>
            <person name="Wei C.L."/>
            <person name="Yagi K."/>
            <person name="Yamanishi H."/>
            <person name="Zabarovsky E."/>
            <person name="Zhu S."/>
            <person name="Zimmer A."/>
            <person name="Hide W."/>
            <person name="Bult C."/>
            <person name="Grimmond S.M."/>
            <person name="Teasdale R.D."/>
            <person name="Liu E.T."/>
            <person name="Brusic V."/>
            <person name="Quackenbush J."/>
            <person name="Wahlestedt C."/>
            <person name="Mattick J.S."/>
            <person name="Hume D.A."/>
            <person name="Kai C."/>
            <person name="Sasaki D."/>
            <person name="Tomaru Y."/>
            <person name="Fukuda S."/>
            <person name="Kanamori-Katayama M."/>
            <person name="Suzuki M."/>
            <person name="Aoki J."/>
            <person name="Arakawa T."/>
            <person name="Iida J."/>
            <person name="Imamura K."/>
            <person name="Itoh M."/>
            <person name="Kato T."/>
            <person name="Kawaji H."/>
            <person name="Kawagashira N."/>
            <person name="Kawashima T."/>
            <person name="Kojima M."/>
            <person name="Kondo S."/>
            <person name="Konno H."/>
            <person name="Nakano K."/>
            <person name="Ninomiya N."/>
            <person name="Nishio T."/>
            <person name="Okada M."/>
            <person name="Plessy C."/>
            <person name="Shibata K."/>
            <person name="Shiraki T."/>
            <person name="Suzuki S."/>
            <person name="Tagami M."/>
            <person name="Waki K."/>
            <person name="Watahiki A."/>
            <person name="Okamura-Oho Y."/>
            <person name="Suzuki H."/>
            <person name="Kawai J."/>
            <person name="Hayashizaki Y."/>
        </authorList>
    </citation>
    <scope>NUCLEOTIDE SEQUENCE [LARGE SCALE MRNA] (ISOFORM 1)</scope>
    <source>
        <strain>C57BL/6J</strain>
        <tissue>Spinal cord</tissue>
        <tissue>Spleen</tissue>
    </source>
</reference>
<reference key="4">
    <citation type="submission" date="2005-07" db="EMBL/GenBank/DDBJ databases">
        <authorList>
            <person name="Mural R.J."/>
            <person name="Adams M.D."/>
            <person name="Myers E.W."/>
            <person name="Smith H.O."/>
            <person name="Venter J.C."/>
        </authorList>
    </citation>
    <scope>NUCLEOTIDE SEQUENCE [LARGE SCALE GENOMIC DNA]</scope>
</reference>
<reference key="5">
    <citation type="journal article" date="2004" name="Genome Res.">
        <title>The status, quality, and expansion of the NIH full-length cDNA project: the Mammalian Gene Collection (MGC).</title>
        <authorList>
            <consortium name="The MGC Project Team"/>
        </authorList>
    </citation>
    <scope>NUCLEOTIDE SEQUENCE [LARGE SCALE MRNA] (ISOFORM 1)</scope>
    <source>
        <strain>CD-1</strain>
        <tissue>Neural stem cell</tissue>
    </source>
</reference>
<reference key="6">
    <citation type="journal article" date="2000" name="Endocrinology">
        <title>Role of leptin in peroxisome proliferator-activated receptor gamma coactivator-1 expression.</title>
        <authorList>
            <person name="Kakuma T."/>
            <person name="Wang Z.-W."/>
            <person name="Pan W."/>
            <person name="Unger R.H."/>
            <person name="Zhou Y.-T."/>
        </authorList>
    </citation>
    <scope>INDUCTION</scope>
</reference>
<reference key="7">
    <citation type="journal article" date="2003" name="Nature">
        <title>Insulin-regulated hepatic gluconeogenesis through FOXO1-PGC-1alpha interaction.</title>
        <authorList>
            <person name="Puigserver P."/>
            <person name="Rhee J."/>
            <person name="Donovan J."/>
            <person name="Walkey C.J."/>
            <person name="Yoon J.C."/>
            <person name="Oriente F."/>
            <person name="Kitamura Y."/>
            <person name="Altomonte J."/>
            <person name="Dong H."/>
            <person name="Accili D."/>
            <person name="Spiegelman B.M."/>
        </authorList>
    </citation>
    <scope>INTERACTION WITH FOXO1</scope>
    <scope>FUNCTION</scope>
</reference>
<reference key="8">
    <citation type="journal article" date="2004" name="Genes Dev.">
        <title>Suppression of mitochondrial respiration through recruitment of p160 myb binding protein to PGC-1alpha: modulation by p38 MAPK.</title>
        <authorList>
            <person name="Fan M."/>
            <person name="Rhee J."/>
            <person name="St Pierre J."/>
            <person name="Handschin C."/>
            <person name="Puigserver P."/>
            <person name="Lin J."/>
            <person name="Jaeger S."/>
            <person name="Erdjument-Bromage H."/>
            <person name="Tempst P."/>
            <person name="Spiegelman B.M."/>
        </authorList>
    </citation>
    <scope>INTERACTION WITH MYBBP1A</scope>
</reference>
<reference key="9">
    <citation type="journal article" date="2005" name="J. Biol. Chem.">
        <title>SIRT1 functionally interacts with the metabolic regulator and transcriptional coactivator PGC-1{alpha}.</title>
        <authorList>
            <person name="Nemoto S."/>
            <person name="Fergusson M.M."/>
            <person name="Finkel T."/>
        </authorList>
    </citation>
    <scope>ACETYLATION</scope>
    <scope>DEACETYLATION BY SIRT1</scope>
</reference>
<reference key="10">
    <citation type="journal article" date="2005" name="Nature">
        <title>Nutrient control of glucose homeostasis through a complex of PGC-1alpha and SIRT1.</title>
        <authorList>
            <person name="Rodgers J.T."/>
            <person name="Lerin C."/>
            <person name="Haas W."/>
            <person name="Gygi S.P."/>
            <person name="Spiegelman B.M."/>
            <person name="Puigserver P."/>
        </authorList>
    </citation>
    <scope>FUNCTION</scope>
    <scope>ACETYLATION AT LYS-77; LYS-144; LYS-183; LYS-253; LYS-270; LYS-277; LYS-320; LYS-346; LYS-412; LYS-441; LYS-450; LYS-757 AND LYS-778</scope>
    <scope>DEACETYLATION BY SIRT1</scope>
</reference>
<reference key="11">
    <citation type="journal article" date="2006" name="Cell Metab.">
        <title>Lipin 1 is an inducible amplifier of the hepatic PGC-1alpha/PPARalpha regulatory pathway.</title>
        <authorList>
            <person name="Finck B.N."/>
            <person name="Gropler M.C."/>
            <person name="Chen Z."/>
            <person name="Leone T.C."/>
            <person name="Croce M.A."/>
            <person name="Harris T.E."/>
            <person name="Lawrence J.C. Jr."/>
            <person name="Kelly D.P."/>
        </authorList>
    </citation>
    <scope>INTERACTION WITH LPIN1</scope>
</reference>
<reference key="12">
    <citation type="journal article" date="2007" name="Cell Metab.">
        <title>Transcriptional control of brown fat determination by PRDM16.</title>
        <authorList>
            <person name="Seale P."/>
            <person name="Kajimura S."/>
            <person name="Yang W."/>
            <person name="Chin S."/>
            <person name="Rohas L.M."/>
            <person name="Uldry M."/>
            <person name="Tavernier G."/>
            <person name="Langin D."/>
            <person name="Spiegelman B.M."/>
        </authorList>
    </citation>
    <scope>INTERACTION WITH PRDM16</scope>
</reference>
<reference key="13">
    <citation type="journal article" date="2007" name="Proc. Natl. Acad. Sci. U.S.A.">
        <title>AMP-activated protein kinase (AMPK) action in skeletal muscle via direct phosphorylation of PGC-1alpha.</title>
        <authorList>
            <person name="Jager S."/>
            <person name="Handschin C."/>
            <person name="St-Pierre J."/>
            <person name="Spiegelman B.M."/>
        </authorList>
    </citation>
    <scope>PHOSPHORYLATION AT THR-177 AND SER-538</scope>
    <scope>MUTAGENESIS OF THR-177 AND SER-538</scope>
</reference>
<reference key="14">
    <citation type="journal article" date="2007" name="Nature">
        <title>Transcriptional coactivator PGC-1alpha integrates the mammalian clock and energy metabolism.</title>
        <authorList>
            <person name="Liu C."/>
            <person name="Li S."/>
            <person name="Liu T."/>
            <person name="Borjigin J."/>
            <person name="Lin J.D."/>
        </authorList>
    </citation>
    <scope>FUNCTION IN CIRCADIAN RHYTHMS</scope>
    <scope>INTERACTION WITH RORA AND RORC</scope>
    <scope>TISSUE SPECIFICITY</scope>
    <scope>INDUCTION</scope>
    <scope>DISRUPTION PHENOTYPE</scope>
    <scope>MUTAGENESIS OF 142-LEU--LEU-146</scope>
</reference>
<reference key="15">
    <citation type="journal article" date="2008" name="Genes Dev.">
        <title>Regulation of the brown and white fat gene programs through a PRDM16/CtBP transcriptional complex.</title>
        <authorList>
            <person name="Kajimura S."/>
            <person name="Seale P."/>
            <person name="Tomaru T."/>
            <person name="Erdjument-Bromage H."/>
            <person name="Cooper M.P."/>
            <person name="Ruas J.L."/>
            <person name="Chin S."/>
            <person name="Tempst P."/>
            <person name="Lazar M.A."/>
            <person name="Spiegelman B.M."/>
        </authorList>
    </citation>
    <scope>INTERACTION WITH PRDM16</scope>
</reference>
<reference key="16">
    <citation type="journal article" date="2010" name="Cell Metab.">
        <title>Cdc2-like kinase 2 is an insulin-regulated suppressor of hepatic gluconeogenesis.</title>
        <authorList>
            <person name="Rodgers J.T."/>
            <person name="Haas W."/>
            <person name="Gygi S.P."/>
            <person name="Puigserver P."/>
        </authorList>
    </citation>
    <scope>PHOSPHORYLATION BY CLK2</scope>
</reference>
<reference key="17">
    <citation type="journal article" date="2012" name="J. Clin. Invest.">
        <title>A metabolic prosurvival role for PML in breast cancer.</title>
        <authorList>
            <person name="Carracedo A."/>
            <person name="Weiss D."/>
            <person name="Leliaert A.K."/>
            <person name="Bhasin M."/>
            <person name="de Boer V.C."/>
            <person name="Laurent G."/>
            <person name="Adams A.C."/>
            <person name="Sundvall M."/>
            <person name="Song S.J."/>
            <person name="Ito K."/>
            <person name="Finley L.S."/>
            <person name="Egia A."/>
            <person name="Libermann T."/>
            <person name="Gerhart-Hines Z."/>
            <person name="Puigserver P."/>
            <person name="Haigis M.C."/>
            <person name="Maratos-Flier E."/>
            <person name="Richardson A.L."/>
            <person name="Schafer Z.T."/>
            <person name="Pandolfi P.P."/>
        </authorList>
    </citation>
    <scope>SUBCELLULAR LOCATION</scope>
    <scope>INTERACTION WITH PML</scope>
</reference>
<reference key="18">
    <citation type="journal article" date="2012" name="Nature">
        <title>A PGC1-alpha-dependent myokine that drives brown-fat-like development of white fat and thermogenesis.</title>
        <authorList>
            <person name="Bostrom P."/>
            <person name="Wu J."/>
            <person name="Jedrychowski M.P."/>
            <person name="Korde A."/>
            <person name="Ye L."/>
            <person name="Lo J.C."/>
            <person name="Rasbach K.A."/>
            <person name="Bostrom E.A."/>
            <person name="Choi J.H."/>
            <person name="Long J.Z."/>
            <person name="Kajimura S."/>
            <person name="Zingaretti M.C."/>
            <person name="Vind B.F."/>
            <person name="Tu H."/>
            <person name="Cinti S."/>
            <person name="Hojlund K."/>
            <person name="Gygi S.P."/>
            <person name="Spiegelman B.M."/>
        </authorList>
    </citation>
    <scope>INDUCTION</scope>
</reference>
<dbReference type="EMBL" id="AF049330">
    <property type="protein sequence ID" value="AAC13554.1"/>
    <property type="molecule type" value="mRNA"/>
</dbReference>
<dbReference type="EMBL" id="JX866946">
    <property type="protein sequence ID" value="AFZ74947.1"/>
    <property type="molecule type" value="mRNA"/>
</dbReference>
<dbReference type="EMBL" id="JX866947">
    <property type="protein sequence ID" value="AFZ74948.1"/>
    <property type="molecule type" value="mRNA"/>
</dbReference>
<dbReference type="EMBL" id="JX866948">
    <property type="protein sequence ID" value="AFZ74949.1"/>
    <property type="molecule type" value="mRNA"/>
</dbReference>
<dbReference type="EMBL" id="AK138668">
    <property type="protein sequence ID" value="BAE23740.1"/>
    <property type="molecule type" value="mRNA"/>
</dbReference>
<dbReference type="EMBL" id="AK143753">
    <property type="protein sequence ID" value="BAE25525.1"/>
    <property type="molecule type" value="mRNA"/>
</dbReference>
<dbReference type="EMBL" id="CH466524">
    <property type="protein sequence ID" value="EDL37647.1"/>
    <property type="molecule type" value="Genomic_DNA"/>
</dbReference>
<dbReference type="EMBL" id="BC066868">
    <property type="protein sequence ID" value="AAH66868.1"/>
    <property type="molecule type" value="mRNA"/>
</dbReference>
<dbReference type="CCDS" id="CCDS19282.1">
    <molecule id="O70343-1"/>
</dbReference>
<dbReference type="RefSeq" id="NP_032930.1">
    <molecule id="O70343-1"/>
    <property type="nucleotide sequence ID" value="NM_008904.3"/>
</dbReference>
<dbReference type="PDB" id="3F7D">
    <property type="method" value="X-ray"/>
    <property type="resolution" value="2.20 A"/>
    <property type="chains" value="B=137-150"/>
</dbReference>
<dbReference type="PDBsum" id="3F7D"/>
<dbReference type="SMR" id="O70343"/>
<dbReference type="BioGRID" id="202321">
    <property type="interactions" value="16"/>
</dbReference>
<dbReference type="CORUM" id="O70343"/>
<dbReference type="DIP" id="DIP-38447N"/>
<dbReference type="FunCoup" id="O70343">
    <property type="interactions" value="1220"/>
</dbReference>
<dbReference type="IntAct" id="O70343">
    <property type="interactions" value="16"/>
</dbReference>
<dbReference type="MINT" id="O70343"/>
<dbReference type="STRING" id="10090.ENSMUSP00000117040"/>
<dbReference type="GlyGen" id="O70343">
    <property type="glycosylation" value="1 site, 1 O-linked glycan (1 site)"/>
</dbReference>
<dbReference type="iPTMnet" id="O70343"/>
<dbReference type="PhosphoSitePlus" id="O70343"/>
<dbReference type="PaxDb" id="10090-ENSMUSP00000117040"/>
<dbReference type="ProteomicsDB" id="291873">
    <molecule id="O70343-1"/>
</dbReference>
<dbReference type="ProteomicsDB" id="291876">
    <molecule id="O70343-4"/>
</dbReference>
<dbReference type="Antibodypedia" id="10142">
    <property type="antibodies" value="339 antibodies from 39 providers"/>
</dbReference>
<dbReference type="DNASU" id="19017"/>
<dbReference type="Ensembl" id="ENSMUST00000132734.8">
    <molecule id="O70343-1"/>
    <property type="protein sequence ID" value="ENSMUSP00000117040.2"/>
    <property type="gene ID" value="ENSMUSG00000029167.14"/>
</dbReference>
<dbReference type="Ensembl" id="ENSMUST00000151104.8">
    <molecule id="O70343-4"/>
    <property type="protein sequence ID" value="ENSMUSP00000116566.3"/>
    <property type="gene ID" value="ENSMUSG00000029167.14"/>
</dbReference>
<dbReference type="GeneID" id="19017"/>
<dbReference type="KEGG" id="mmu:19017"/>
<dbReference type="UCSC" id="uc008xkc.2">
    <molecule id="O70343-1"/>
    <property type="organism name" value="mouse"/>
</dbReference>
<dbReference type="AGR" id="MGI:1342774"/>
<dbReference type="CTD" id="10891"/>
<dbReference type="MGI" id="MGI:1342774">
    <property type="gene designation" value="Ppargc1a"/>
</dbReference>
<dbReference type="VEuPathDB" id="HostDB:ENSMUSG00000029167"/>
<dbReference type="eggNOG" id="ENOG502QSXU">
    <property type="taxonomic scope" value="Eukaryota"/>
</dbReference>
<dbReference type="GeneTree" id="ENSGT00950000183137"/>
<dbReference type="HOGENOM" id="CLU_020104_0_0_1"/>
<dbReference type="InParanoid" id="O70343"/>
<dbReference type="OMA" id="DLPCNNR"/>
<dbReference type="OrthoDB" id="10047851at2759"/>
<dbReference type="PhylomeDB" id="O70343"/>
<dbReference type="TreeFam" id="TF343068"/>
<dbReference type="BioGRID-ORCS" id="19017">
    <property type="hits" value="2 hits in 84 CRISPR screens"/>
</dbReference>
<dbReference type="ChiTaRS" id="Ppargc1a">
    <property type="organism name" value="mouse"/>
</dbReference>
<dbReference type="EvolutionaryTrace" id="O70343"/>
<dbReference type="PRO" id="PR:O70343"/>
<dbReference type="Proteomes" id="UP000000589">
    <property type="component" value="Chromosome 5"/>
</dbReference>
<dbReference type="RNAct" id="O70343">
    <property type="molecule type" value="protein"/>
</dbReference>
<dbReference type="Bgee" id="ENSMUSG00000029167">
    <property type="expression patterns" value="Expressed in atrioventricular valve and 258 other cell types or tissues"/>
</dbReference>
<dbReference type="ExpressionAtlas" id="O70343">
    <property type="expression patterns" value="baseline and differential"/>
</dbReference>
<dbReference type="GO" id="GO:0000785">
    <property type="term" value="C:chromatin"/>
    <property type="evidence" value="ECO:0000266"/>
    <property type="project" value="MGI"/>
</dbReference>
<dbReference type="GO" id="GO:0005829">
    <property type="term" value="C:cytosol"/>
    <property type="evidence" value="ECO:0007669"/>
    <property type="project" value="Ensembl"/>
</dbReference>
<dbReference type="GO" id="GO:0005654">
    <property type="term" value="C:nucleoplasm"/>
    <property type="evidence" value="ECO:0000304"/>
    <property type="project" value="Reactome"/>
</dbReference>
<dbReference type="GO" id="GO:0005634">
    <property type="term" value="C:nucleus"/>
    <property type="evidence" value="ECO:0000314"/>
    <property type="project" value="MGI"/>
</dbReference>
<dbReference type="GO" id="GO:0016605">
    <property type="term" value="C:PML body"/>
    <property type="evidence" value="ECO:0007669"/>
    <property type="project" value="UniProtKB-SubCell"/>
</dbReference>
<dbReference type="GO" id="GO:0031490">
    <property type="term" value="F:chromatin DNA binding"/>
    <property type="evidence" value="ECO:0000314"/>
    <property type="project" value="MGI"/>
</dbReference>
<dbReference type="GO" id="GO:0003677">
    <property type="term" value="F:DNA binding"/>
    <property type="evidence" value="ECO:0000314"/>
    <property type="project" value="MGI"/>
</dbReference>
<dbReference type="GO" id="GO:0106222">
    <property type="term" value="F:lncRNA binding"/>
    <property type="evidence" value="ECO:0000353"/>
    <property type="project" value="MGI"/>
</dbReference>
<dbReference type="GO" id="GO:0016922">
    <property type="term" value="F:nuclear receptor binding"/>
    <property type="evidence" value="ECO:0007669"/>
    <property type="project" value="Ensembl"/>
</dbReference>
<dbReference type="GO" id="GO:0061629">
    <property type="term" value="F:RNA polymerase II-specific DNA-binding transcription factor binding"/>
    <property type="evidence" value="ECO:0000353"/>
    <property type="project" value="BHF-UCL"/>
</dbReference>
<dbReference type="GO" id="GO:0043565">
    <property type="term" value="F:sequence-specific DNA binding"/>
    <property type="evidence" value="ECO:0000250"/>
    <property type="project" value="UniProtKB"/>
</dbReference>
<dbReference type="GO" id="GO:0003713">
    <property type="term" value="F:transcription coactivator activity"/>
    <property type="evidence" value="ECO:0000314"/>
    <property type="project" value="UniProtKB"/>
</dbReference>
<dbReference type="GO" id="GO:0003712">
    <property type="term" value="F:transcription coregulator activity"/>
    <property type="evidence" value="ECO:0000314"/>
    <property type="project" value="BHF-UCL"/>
</dbReference>
<dbReference type="GO" id="GO:0031625">
    <property type="term" value="F:ubiquitin protein ligase binding"/>
    <property type="evidence" value="ECO:0007669"/>
    <property type="project" value="Ensembl"/>
</dbReference>
<dbReference type="GO" id="GO:0060612">
    <property type="term" value="P:adipose tissue development"/>
    <property type="evidence" value="ECO:0000315"/>
    <property type="project" value="CACAO"/>
</dbReference>
<dbReference type="GO" id="GO:0034599">
    <property type="term" value="P:cellular response to oxidative stress"/>
    <property type="evidence" value="ECO:0000315"/>
    <property type="project" value="MGI"/>
</dbReference>
<dbReference type="GO" id="GO:0032922">
    <property type="term" value="P:circadian regulation of gene expression"/>
    <property type="evidence" value="ECO:0000314"/>
    <property type="project" value="UniProtKB"/>
</dbReference>
<dbReference type="GO" id="GO:0097009">
    <property type="term" value="P:energy homeostasis"/>
    <property type="evidence" value="ECO:0000315"/>
    <property type="project" value="UniProtKB"/>
</dbReference>
<dbReference type="GO" id="GO:0006094">
    <property type="term" value="P:gluconeogenesis"/>
    <property type="evidence" value="ECO:0000314"/>
    <property type="project" value="UniProtKB"/>
</dbReference>
<dbReference type="GO" id="GO:0007005">
    <property type="term" value="P:mitochondrion organization"/>
    <property type="evidence" value="ECO:0000314"/>
    <property type="project" value="MGI"/>
</dbReference>
<dbReference type="GO" id="GO:0043524">
    <property type="term" value="P:negative regulation of neuron apoptotic process"/>
    <property type="evidence" value="ECO:0000315"/>
    <property type="project" value="MGI"/>
</dbReference>
<dbReference type="GO" id="GO:0048662">
    <property type="term" value="P:negative regulation of smooth muscle cell proliferation"/>
    <property type="evidence" value="ECO:0007669"/>
    <property type="project" value="Ensembl"/>
</dbReference>
<dbReference type="GO" id="GO:0051402">
    <property type="term" value="P:neuron apoptotic process"/>
    <property type="evidence" value="ECO:0000315"/>
    <property type="project" value="MGI"/>
</dbReference>
<dbReference type="GO" id="GO:0120162">
    <property type="term" value="P:positive regulation of cold-induced thermogenesis"/>
    <property type="evidence" value="ECO:0000315"/>
    <property type="project" value="YuBioLab"/>
</dbReference>
<dbReference type="GO" id="GO:0045893">
    <property type="term" value="P:positive regulation of DNA-templated transcription"/>
    <property type="evidence" value="ECO:0000314"/>
    <property type="project" value="MGI"/>
</dbReference>
<dbReference type="GO" id="GO:0010628">
    <property type="term" value="P:positive regulation of gene expression"/>
    <property type="evidence" value="ECO:0007669"/>
    <property type="project" value="Ensembl"/>
</dbReference>
<dbReference type="GO" id="GO:0045944">
    <property type="term" value="P:positive regulation of transcription by RNA polymerase II"/>
    <property type="evidence" value="ECO:0000315"/>
    <property type="project" value="BHF-UCL"/>
</dbReference>
<dbReference type="GO" id="GO:0042752">
    <property type="term" value="P:regulation of circadian rhythm"/>
    <property type="evidence" value="ECO:0000314"/>
    <property type="project" value="UniProtKB"/>
</dbReference>
<dbReference type="GO" id="GO:0006355">
    <property type="term" value="P:regulation of DNA-templated transcription"/>
    <property type="evidence" value="ECO:0000250"/>
    <property type="project" value="UniProtKB"/>
</dbReference>
<dbReference type="GO" id="GO:0022904">
    <property type="term" value="P:respiratory electron transport chain"/>
    <property type="evidence" value="ECO:0000314"/>
    <property type="project" value="MGI"/>
</dbReference>
<dbReference type="GO" id="GO:0002021">
    <property type="term" value="P:response to dietary excess"/>
    <property type="evidence" value="ECO:0000314"/>
    <property type="project" value="MGI"/>
</dbReference>
<dbReference type="GO" id="GO:0014850">
    <property type="term" value="P:response to muscle activity"/>
    <property type="evidence" value="ECO:0000314"/>
    <property type="project" value="MGI"/>
</dbReference>
<dbReference type="CDD" id="cd12623">
    <property type="entry name" value="RRM_PPARGC1A"/>
    <property type="match status" value="1"/>
</dbReference>
<dbReference type="FunFam" id="3.30.70.330:FF:000184">
    <property type="entry name" value="Peroxisome proliferator-activated receptor gamma coactivator 1-alpha"/>
    <property type="match status" value="1"/>
</dbReference>
<dbReference type="Gene3D" id="3.30.70.330">
    <property type="match status" value="1"/>
</dbReference>
<dbReference type="IDEAL" id="IID50038"/>
<dbReference type="InterPro" id="IPR012677">
    <property type="entry name" value="Nucleotide-bd_a/b_plait_sf"/>
</dbReference>
<dbReference type="InterPro" id="IPR034605">
    <property type="entry name" value="PGC-1"/>
</dbReference>
<dbReference type="InterPro" id="IPR034833">
    <property type="entry name" value="PPARGC1A_RRM"/>
</dbReference>
<dbReference type="InterPro" id="IPR035979">
    <property type="entry name" value="RBD_domain_sf"/>
</dbReference>
<dbReference type="InterPro" id="IPR000504">
    <property type="entry name" value="RRM_dom"/>
</dbReference>
<dbReference type="PANTHER" id="PTHR15528">
    <property type="entry name" value="PEROXISOME PROLIFERATOR ACTIVATED RECEPTOR GAMMA COACTIVATOR 1 PGC-1 -RELATED"/>
    <property type="match status" value="1"/>
</dbReference>
<dbReference type="PANTHER" id="PTHR15528:SF10">
    <property type="entry name" value="PEROXISOME PROLIFERATOR-ACTIVATED RECEPTOR GAMMA COACTIVATOR 1-ALPHA"/>
    <property type="match status" value="1"/>
</dbReference>
<dbReference type="Pfam" id="PF00076">
    <property type="entry name" value="RRM_1"/>
    <property type="match status" value="1"/>
</dbReference>
<dbReference type="SMART" id="SM00360">
    <property type="entry name" value="RRM"/>
    <property type="match status" value="1"/>
</dbReference>
<dbReference type="SUPFAM" id="SSF54928">
    <property type="entry name" value="RNA-binding domain, RBD"/>
    <property type="match status" value="1"/>
</dbReference>
<dbReference type="PROSITE" id="PS50102">
    <property type="entry name" value="RRM"/>
    <property type="match status" value="1"/>
</dbReference>
<protein>
    <recommendedName>
        <fullName>Peroxisome proliferator-activated receptor gamma coactivator 1-alpha</fullName>
        <shortName>PGC-1-alpha</shortName>
        <shortName>PPAR-gamma coactivator 1-alpha</shortName>
        <shortName>PPARGC-1-alpha</shortName>
    </recommendedName>
</protein>